<comment type="function">
    <text evidence="1">Tumor suppressor which has the ability to inhibit cell growth and be pro-apoptotic during cell stress. May act as a 'capping' or 'branching' protein for keratin filaments in the cell periphery. May regulate K8/K18 filament and desmosome organization mainly at the apical or peripheral regions of simple epithelial cells (By similarity). Is a negative regulator of ciliogenesis (By similarity).</text>
</comment>
<comment type="subunit">
    <text evidence="1">Interacts specifically with keratin proteins including, KRT5, KRT6A, KRT8, KRT14, KRT16 and KRT18. Interacts with KCTD17 (By similarity).</text>
</comment>
<comment type="subcellular location">
    <subcellularLocation>
        <location evidence="1">Cytoplasm</location>
        <location evidence="1">Cytoskeleton</location>
    </subcellularLocation>
    <subcellularLocation>
        <location evidence="1">Cytoplasm</location>
    </subcellularLocation>
    <subcellularLocation>
        <location evidence="1">Cell membrane</location>
    </subcellularLocation>
    <subcellularLocation>
        <location evidence="1">Mitochondrion</location>
    </subcellularLocation>
    <subcellularLocation>
        <location evidence="1">Cytoplasm</location>
        <location evidence="1">Cytoskeleton</location>
        <location evidence="1">Microtubule organizing center</location>
        <location evidence="1">Centrosome</location>
    </subcellularLocation>
</comment>
<comment type="alternative products">
    <event type="alternative splicing"/>
    <isoform>
        <id>Q3TVW5-1</id>
        <name evidence="5">1</name>
        <sequence type="displayed"/>
    </isoform>
    <isoform>
        <id>Q3TVW5-2</id>
        <name evidence="5">2</name>
        <sequence type="described" ref="VSP_052475"/>
    </isoform>
</comment>
<comment type="tissue specificity">
    <text evidence="4">Expressed in all tissues examined, including brain, liver, small intestine, large intestine, lung and heart. Found concentrated in tubular structures within hepatocytes, and in the apical cortical region and desmosomes of the apical junctional domain in enterocytes of the small intestine. In the hair follicle, localized at the outer root sheath. Also expressed in blood vessels (at protein level).</text>
</comment>
<comment type="PTM">
    <text evidence="1">Ubiquitinated. Ubiquitination by the BCR(KCTD17) E3 ubiquitin ligase complex results in proteasomal degradation, and induces ciliogenesis.</text>
</comment>
<comment type="similarity">
    <text evidence="8">Belongs to the TCHP family.</text>
</comment>
<comment type="sequence caution" evidence="8">
    <conflict type="erroneous initiation">
        <sequence resource="EMBL-CDS" id="AAH47930"/>
    </conflict>
    <text>Truncated N-terminus.</text>
</comment>
<evidence type="ECO:0000250" key="1">
    <source>
        <dbReference type="UniProtKB" id="Q9BT92"/>
    </source>
</evidence>
<evidence type="ECO:0000255" key="2"/>
<evidence type="ECO:0000256" key="3">
    <source>
        <dbReference type="SAM" id="MobiDB-lite"/>
    </source>
</evidence>
<evidence type="ECO:0000269" key="4">
    <source>
    </source>
</evidence>
<evidence type="ECO:0000269" key="5">
    <source>
    </source>
</evidence>
<evidence type="ECO:0000303" key="6">
    <source>
    </source>
</evidence>
<evidence type="ECO:0000303" key="7">
    <source>
    </source>
</evidence>
<evidence type="ECO:0000305" key="8"/>
<evidence type="ECO:0000312" key="9">
    <source>
        <dbReference type="EMBL" id="AAH43048.1"/>
    </source>
</evidence>
<evidence type="ECO:0000312" key="10">
    <source>
        <dbReference type="EMBL" id="AAH47930.1"/>
    </source>
</evidence>
<evidence type="ECO:0000312" key="11">
    <source>
        <dbReference type="EMBL" id="BAB32251.1"/>
    </source>
</evidence>
<evidence type="ECO:0000312" key="12">
    <source>
        <dbReference type="EMBL" id="BAC38735.1"/>
    </source>
</evidence>
<evidence type="ECO:0000312" key="13">
    <source>
        <dbReference type="EMBL" id="BAE35503.1"/>
    </source>
</evidence>
<evidence type="ECO:0000312" key="14">
    <source>
        <dbReference type="MGI" id="MGI:1925082"/>
    </source>
</evidence>
<keyword id="KW-0025">Alternative splicing</keyword>
<keyword id="KW-0053">Apoptosis</keyword>
<keyword id="KW-1003">Cell membrane</keyword>
<keyword id="KW-0970">Cilium biogenesis/degradation</keyword>
<keyword id="KW-0175">Coiled coil</keyword>
<keyword id="KW-0963">Cytoplasm</keyword>
<keyword id="KW-0206">Cytoskeleton</keyword>
<keyword id="KW-0472">Membrane</keyword>
<keyword id="KW-0496">Mitochondrion</keyword>
<keyword id="KW-1185">Reference proteome</keyword>
<keyword id="KW-0043">Tumor suppressor</keyword>
<keyword id="KW-0832">Ubl conjugation</keyword>
<proteinExistence type="evidence at protein level"/>
<feature type="chain" id="PRO_0000292610" description="Trichoplein keratin filament-binding protein">
    <location>
        <begin position="1"/>
        <end position="497"/>
    </location>
</feature>
<feature type="region of interest" description="Interaction with keratin proteins" evidence="1">
    <location>
        <begin position="72"/>
        <end position="457"/>
    </location>
</feature>
<feature type="region of interest" description="Disordered" evidence="3">
    <location>
        <begin position="167"/>
        <end position="188"/>
    </location>
</feature>
<feature type="region of interest" description="Trichohyalin/plectin homology domain" evidence="1">
    <location>
        <begin position="258"/>
        <end position="424"/>
    </location>
</feature>
<feature type="region of interest" description="Disordered" evidence="3">
    <location>
        <begin position="441"/>
        <end position="497"/>
    </location>
</feature>
<feature type="coiled-coil region" evidence="2">
    <location>
        <begin position="67"/>
        <end position="140"/>
    </location>
</feature>
<feature type="coiled-coil region" evidence="2">
    <location>
        <begin position="166"/>
        <end position="271"/>
    </location>
</feature>
<feature type="coiled-coil region" evidence="2">
    <location>
        <begin position="327"/>
        <end position="479"/>
    </location>
</feature>
<feature type="compositionally biased region" description="Basic and acidic residues" evidence="3">
    <location>
        <begin position="168"/>
        <end position="188"/>
    </location>
</feature>
<feature type="compositionally biased region" description="Basic and acidic residues" evidence="3">
    <location>
        <begin position="444"/>
        <end position="453"/>
    </location>
</feature>
<feature type="compositionally biased region" description="Basic residues" evidence="3">
    <location>
        <begin position="488"/>
        <end position="497"/>
    </location>
</feature>
<feature type="splice variant" id="VSP_052475" description="In isoform 2." evidence="6 7">
    <original>AERQGQEWEAARQEEEEEEEARQAEEHSNALLQQEAKTMAEKGYQPKLHGHLRIAWD</original>
    <variation>GPKGKGGLAGHYRTELGRGP</variation>
    <location>
        <begin position="441"/>
        <end position="497"/>
    </location>
</feature>
<feature type="sequence conflict" description="In Ref. 1; BAE35503." evidence="8" ref="1">
    <original>G</original>
    <variation>S</variation>
    <location>
        <position position="109"/>
    </location>
</feature>
<feature type="sequence conflict" description="In Ref. 2; AAH47930." evidence="8" ref="2">
    <original>KEME</original>
    <variation>LWVS</variation>
    <location>
        <begin position="229"/>
        <end position="232"/>
    </location>
</feature>
<name>TCHP_MOUSE</name>
<organism>
    <name type="scientific">Mus musculus</name>
    <name type="common">Mouse</name>
    <dbReference type="NCBI Taxonomy" id="10090"/>
    <lineage>
        <taxon>Eukaryota</taxon>
        <taxon>Metazoa</taxon>
        <taxon>Chordata</taxon>
        <taxon>Craniata</taxon>
        <taxon>Vertebrata</taxon>
        <taxon>Euteleostomi</taxon>
        <taxon>Mammalia</taxon>
        <taxon>Eutheria</taxon>
        <taxon>Euarchontoglires</taxon>
        <taxon>Glires</taxon>
        <taxon>Rodentia</taxon>
        <taxon>Myomorpha</taxon>
        <taxon>Muroidea</taxon>
        <taxon>Muridae</taxon>
        <taxon>Murinae</taxon>
        <taxon>Mus</taxon>
        <taxon>Mus</taxon>
    </lineage>
</organism>
<sequence>MALPTLPSYWSSRKHMDLRQRQHQQEDQFRQQWEQNSRYFRTWDIHNSKQIEWSSKISYQRSMHAYHCEKMKEEKRKILELRRERLRELLLEEQDLLAAELDELRLSMGLREQRLREQHQDLKSAREEQRKLIAERLLYEHWKKNNPKLRELELDLHKKHVINSWATQKEEKKQQEATEKQENKRLENQYAAARREAEARMRVEEERRQLEGRLQAEALRQQMEELKQKEMEATKLKKEQENLLRQRWELERLEEERRQMAALRRKTELGRFLKHQYNAQLNRRTQEIQEELEVDGRILQALLEKEGELQQVELARREQARADAAWMKQVIEEQLQLEKAREAELQQLLREEAKEMWEKREAEWAREQVARDRLMSEVLTGRQQQILEKIEQNRRAQEETLKHREKLIRSLEEGKQLAQRAKEESEELKLARKQELEAQVAERQGQEWEAARQEEEEEEEARQAEEHSNALLQQEAKTMAEKGYQPKLHGHLRIAWD</sequence>
<accession>Q3TVW5</accession>
<accession>Q80ZV6</accession>
<accession>Q8C459</accession>
<accession>Q9CTP0</accession>
<reference evidence="8 13" key="1">
    <citation type="journal article" date="2005" name="Science">
        <title>The transcriptional landscape of the mammalian genome.</title>
        <authorList>
            <person name="Carninci P."/>
            <person name="Kasukawa T."/>
            <person name="Katayama S."/>
            <person name="Gough J."/>
            <person name="Frith M.C."/>
            <person name="Maeda N."/>
            <person name="Oyama R."/>
            <person name="Ravasi T."/>
            <person name="Lenhard B."/>
            <person name="Wells C."/>
            <person name="Kodzius R."/>
            <person name="Shimokawa K."/>
            <person name="Bajic V.B."/>
            <person name="Brenner S.E."/>
            <person name="Batalov S."/>
            <person name="Forrest A.R."/>
            <person name="Zavolan M."/>
            <person name="Davis M.J."/>
            <person name="Wilming L.G."/>
            <person name="Aidinis V."/>
            <person name="Allen J.E."/>
            <person name="Ambesi-Impiombato A."/>
            <person name="Apweiler R."/>
            <person name="Aturaliya R.N."/>
            <person name="Bailey T.L."/>
            <person name="Bansal M."/>
            <person name="Baxter L."/>
            <person name="Beisel K.W."/>
            <person name="Bersano T."/>
            <person name="Bono H."/>
            <person name="Chalk A.M."/>
            <person name="Chiu K.P."/>
            <person name="Choudhary V."/>
            <person name="Christoffels A."/>
            <person name="Clutterbuck D.R."/>
            <person name="Crowe M.L."/>
            <person name="Dalla E."/>
            <person name="Dalrymple B.P."/>
            <person name="de Bono B."/>
            <person name="Della Gatta G."/>
            <person name="di Bernardo D."/>
            <person name="Down T."/>
            <person name="Engstrom P."/>
            <person name="Fagiolini M."/>
            <person name="Faulkner G."/>
            <person name="Fletcher C.F."/>
            <person name="Fukushima T."/>
            <person name="Furuno M."/>
            <person name="Futaki S."/>
            <person name="Gariboldi M."/>
            <person name="Georgii-Hemming P."/>
            <person name="Gingeras T.R."/>
            <person name="Gojobori T."/>
            <person name="Green R.E."/>
            <person name="Gustincich S."/>
            <person name="Harbers M."/>
            <person name="Hayashi Y."/>
            <person name="Hensch T.K."/>
            <person name="Hirokawa N."/>
            <person name="Hill D."/>
            <person name="Huminiecki L."/>
            <person name="Iacono M."/>
            <person name="Ikeo K."/>
            <person name="Iwama A."/>
            <person name="Ishikawa T."/>
            <person name="Jakt M."/>
            <person name="Kanapin A."/>
            <person name="Katoh M."/>
            <person name="Kawasawa Y."/>
            <person name="Kelso J."/>
            <person name="Kitamura H."/>
            <person name="Kitano H."/>
            <person name="Kollias G."/>
            <person name="Krishnan S.P."/>
            <person name="Kruger A."/>
            <person name="Kummerfeld S.K."/>
            <person name="Kurochkin I.V."/>
            <person name="Lareau L.F."/>
            <person name="Lazarevic D."/>
            <person name="Lipovich L."/>
            <person name="Liu J."/>
            <person name="Liuni S."/>
            <person name="McWilliam S."/>
            <person name="Madan Babu M."/>
            <person name="Madera M."/>
            <person name="Marchionni L."/>
            <person name="Matsuda H."/>
            <person name="Matsuzawa S."/>
            <person name="Miki H."/>
            <person name="Mignone F."/>
            <person name="Miyake S."/>
            <person name="Morris K."/>
            <person name="Mottagui-Tabar S."/>
            <person name="Mulder N."/>
            <person name="Nakano N."/>
            <person name="Nakauchi H."/>
            <person name="Ng P."/>
            <person name="Nilsson R."/>
            <person name="Nishiguchi S."/>
            <person name="Nishikawa S."/>
            <person name="Nori F."/>
            <person name="Ohara O."/>
            <person name="Okazaki Y."/>
            <person name="Orlando V."/>
            <person name="Pang K.C."/>
            <person name="Pavan W.J."/>
            <person name="Pavesi G."/>
            <person name="Pesole G."/>
            <person name="Petrovsky N."/>
            <person name="Piazza S."/>
            <person name="Reed J."/>
            <person name="Reid J.F."/>
            <person name="Ring B.Z."/>
            <person name="Ringwald M."/>
            <person name="Rost B."/>
            <person name="Ruan Y."/>
            <person name="Salzberg S.L."/>
            <person name="Sandelin A."/>
            <person name="Schneider C."/>
            <person name="Schoenbach C."/>
            <person name="Sekiguchi K."/>
            <person name="Semple C.A."/>
            <person name="Seno S."/>
            <person name="Sessa L."/>
            <person name="Sheng Y."/>
            <person name="Shibata Y."/>
            <person name="Shimada H."/>
            <person name="Shimada K."/>
            <person name="Silva D."/>
            <person name="Sinclair B."/>
            <person name="Sperling S."/>
            <person name="Stupka E."/>
            <person name="Sugiura K."/>
            <person name="Sultana R."/>
            <person name="Takenaka Y."/>
            <person name="Taki K."/>
            <person name="Tammoja K."/>
            <person name="Tan S.L."/>
            <person name="Tang S."/>
            <person name="Taylor M.S."/>
            <person name="Tegner J."/>
            <person name="Teichmann S.A."/>
            <person name="Ueda H.R."/>
            <person name="van Nimwegen E."/>
            <person name="Verardo R."/>
            <person name="Wei C.L."/>
            <person name="Yagi K."/>
            <person name="Yamanishi H."/>
            <person name="Zabarovsky E."/>
            <person name="Zhu S."/>
            <person name="Zimmer A."/>
            <person name="Hide W."/>
            <person name="Bult C."/>
            <person name="Grimmond S.M."/>
            <person name="Teasdale R.D."/>
            <person name="Liu E.T."/>
            <person name="Brusic V."/>
            <person name="Quackenbush J."/>
            <person name="Wahlestedt C."/>
            <person name="Mattick J.S."/>
            <person name="Hume D.A."/>
            <person name="Kai C."/>
            <person name="Sasaki D."/>
            <person name="Tomaru Y."/>
            <person name="Fukuda S."/>
            <person name="Kanamori-Katayama M."/>
            <person name="Suzuki M."/>
            <person name="Aoki J."/>
            <person name="Arakawa T."/>
            <person name="Iida J."/>
            <person name="Imamura K."/>
            <person name="Itoh M."/>
            <person name="Kato T."/>
            <person name="Kawaji H."/>
            <person name="Kawagashira N."/>
            <person name="Kawashima T."/>
            <person name="Kojima M."/>
            <person name="Kondo S."/>
            <person name="Konno H."/>
            <person name="Nakano K."/>
            <person name="Ninomiya N."/>
            <person name="Nishio T."/>
            <person name="Okada M."/>
            <person name="Plessy C."/>
            <person name="Shibata K."/>
            <person name="Shiraki T."/>
            <person name="Suzuki S."/>
            <person name="Tagami M."/>
            <person name="Waki K."/>
            <person name="Watahiki A."/>
            <person name="Okamura-Oho Y."/>
            <person name="Suzuki H."/>
            <person name="Kawai J."/>
            <person name="Hayashizaki Y."/>
        </authorList>
    </citation>
    <scope>NUCLEOTIDE SEQUENCE [LARGE SCALE MRNA] (ISOFORMS 1 AND 2)</scope>
    <source>
        <strain evidence="13">C57BL/6J</strain>
        <tissue evidence="12">Embryonic spinal cord</tissue>
        <tissue evidence="13">Osteoclast</tissue>
        <tissue evidence="11">Retina</tissue>
    </source>
</reference>
<reference evidence="8 9" key="2">
    <citation type="journal article" date="2004" name="Genome Res.">
        <title>The status, quality, and expansion of the NIH full-length cDNA project: the Mammalian Gene Collection (MGC).</title>
        <authorList>
            <consortium name="The MGC Project Team"/>
        </authorList>
    </citation>
    <scope>NUCLEOTIDE SEQUENCE [LARGE SCALE MRNA] (ISOFORM 2)</scope>
    <scope>NUCLEOTIDE SEQUENCE [LARGE SCALE MRNA] OF 229-497 (ISOFORM 1)</scope>
    <source>
        <strain evidence="9">C57BL/6J</strain>
        <tissue evidence="9">Brain</tissue>
        <tissue evidence="10">Retina</tissue>
    </source>
</reference>
<reference key="3">
    <citation type="journal article" date="2005" name="J. Cell Sci.">
        <title>Identification of trichoplein, a novel keratin filament-binding protein.</title>
        <authorList>
            <person name="Nishizawa M."/>
            <person name="Izawa I."/>
            <person name="Inoko A."/>
            <person name="Hayashi Y."/>
            <person name="Nagata K."/>
            <person name="Yokoyama T."/>
            <person name="Usukura J."/>
            <person name="Inagaki M."/>
        </authorList>
    </citation>
    <scope>TISSUE SPECIFICITY</scope>
</reference>
<protein>
    <recommendedName>
        <fullName>Trichoplein keratin filament-binding protein</fullName>
        <shortName>Protein TCHP</shortName>
    </recommendedName>
    <alternativeName>
        <fullName>Mitochondrial protein with oncostatic activity</fullName>
        <shortName>Mitostatin</shortName>
    </alternativeName>
</protein>
<dbReference type="EMBL" id="AK020912">
    <property type="protein sequence ID" value="BAB32251.1"/>
    <property type="molecule type" value="mRNA"/>
</dbReference>
<dbReference type="EMBL" id="AK083027">
    <property type="protein sequence ID" value="BAC38735.1"/>
    <property type="molecule type" value="mRNA"/>
</dbReference>
<dbReference type="EMBL" id="AK159947">
    <property type="protein sequence ID" value="BAE35503.1"/>
    <property type="molecule type" value="mRNA"/>
</dbReference>
<dbReference type="EMBL" id="BC043048">
    <property type="protein sequence ID" value="AAH43048.1"/>
    <property type="molecule type" value="mRNA"/>
</dbReference>
<dbReference type="EMBL" id="BC047930">
    <property type="protein sequence ID" value="AAH47930.1"/>
    <property type="status" value="ALT_INIT"/>
    <property type="molecule type" value="mRNA"/>
</dbReference>
<dbReference type="CCDS" id="CCDS51624.1">
    <molecule id="Q3TVW5-1"/>
</dbReference>
<dbReference type="RefSeq" id="NP_084268.2">
    <molecule id="Q3TVW5-1"/>
    <property type="nucleotide sequence ID" value="NM_029992.2"/>
</dbReference>
<dbReference type="RefSeq" id="XP_006530573.1">
    <property type="nucleotide sequence ID" value="XM_006530510.3"/>
</dbReference>
<dbReference type="SMR" id="Q3TVW5"/>
<dbReference type="BioGRID" id="218956">
    <property type="interactions" value="6"/>
</dbReference>
<dbReference type="FunCoup" id="Q3TVW5">
    <property type="interactions" value="1967"/>
</dbReference>
<dbReference type="IntAct" id="Q3TVW5">
    <property type="interactions" value="1"/>
</dbReference>
<dbReference type="MINT" id="Q3TVW5"/>
<dbReference type="STRING" id="10090.ENSMUSP00000092009"/>
<dbReference type="iPTMnet" id="Q3TVW5"/>
<dbReference type="PhosphoSitePlus" id="Q3TVW5"/>
<dbReference type="PaxDb" id="10090-ENSMUSP00000092009"/>
<dbReference type="ProteomicsDB" id="263023">
    <molecule id="Q3TVW5-1"/>
</dbReference>
<dbReference type="ProteomicsDB" id="263024">
    <molecule id="Q3TVW5-2"/>
</dbReference>
<dbReference type="Ensembl" id="ENSMUST00000094441.11">
    <molecule id="Q3TVW5-1"/>
    <property type="protein sequence ID" value="ENSMUSP00000092009.5"/>
    <property type="gene ID" value="ENSMUSG00000002486.16"/>
</dbReference>
<dbReference type="GeneID" id="77832"/>
<dbReference type="KEGG" id="mmu:77832"/>
<dbReference type="UCSC" id="uc008yzx.1">
    <molecule id="Q3TVW5-1"/>
    <property type="organism name" value="mouse"/>
</dbReference>
<dbReference type="AGR" id="MGI:1925082"/>
<dbReference type="CTD" id="84260"/>
<dbReference type="MGI" id="MGI:1925082">
    <property type="gene designation" value="Tchp"/>
</dbReference>
<dbReference type="VEuPathDB" id="HostDB:ENSMUSG00000002486"/>
<dbReference type="eggNOG" id="ENOG502QVSH">
    <property type="taxonomic scope" value="Eukaryota"/>
</dbReference>
<dbReference type="GeneTree" id="ENSGT01110000267528"/>
<dbReference type="HOGENOM" id="CLU_042533_1_0_1"/>
<dbReference type="InParanoid" id="Q3TVW5"/>
<dbReference type="OMA" id="QNSHYFR"/>
<dbReference type="OrthoDB" id="6431598at2759"/>
<dbReference type="PhylomeDB" id="Q3TVW5"/>
<dbReference type="TreeFam" id="TF329032"/>
<dbReference type="BioGRID-ORCS" id="77832">
    <property type="hits" value="3 hits in 81 CRISPR screens"/>
</dbReference>
<dbReference type="PRO" id="PR:Q3TVW5"/>
<dbReference type="Proteomes" id="UP000000589">
    <property type="component" value="Chromosome 5"/>
</dbReference>
<dbReference type="RNAct" id="Q3TVW5">
    <property type="molecule type" value="protein"/>
</dbReference>
<dbReference type="Bgee" id="ENSMUSG00000002486">
    <property type="expression patterns" value="Expressed in spermatocyte and 171 other cell types or tissues"/>
</dbReference>
<dbReference type="ExpressionAtlas" id="Q3TVW5">
    <property type="expression patterns" value="baseline and differential"/>
</dbReference>
<dbReference type="GO" id="GO:0045179">
    <property type="term" value="C:apical cortex"/>
    <property type="evidence" value="ECO:0000250"/>
    <property type="project" value="HGNC-UCL"/>
</dbReference>
<dbReference type="GO" id="GO:0005813">
    <property type="term" value="C:centrosome"/>
    <property type="evidence" value="ECO:0000250"/>
    <property type="project" value="UniProtKB"/>
</dbReference>
<dbReference type="GO" id="GO:0097539">
    <property type="term" value="C:ciliary transition fiber"/>
    <property type="evidence" value="ECO:0000314"/>
    <property type="project" value="MGI"/>
</dbReference>
<dbReference type="GO" id="GO:0005737">
    <property type="term" value="C:cytoplasm"/>
    <property type="evidence" value="ECO:0000250"/>
    <property type="project" value="UniProtKB"/>
</dbReference>
<dbReference type="GO" id="GO:0030057">
    <property type="term" value="C:desmosome"/>
    <property type="evidence" value="ECO:0000314"/>
    <property type="project" value="MGI"/>
</dbReference>
<dbReference type="GO" id="GO:0045095">
    <property type="term" value="C:keratin filament"/>
    <property type="evidence" value="ECO:0000314"/>
    <property type="project" value="MGI"/>
</dbReference>
<dbReference type="GO" id="GO:0005739">
    <property type="term" value="C:mitochondrion"/>
    <property type="evidence" value="ECO:0000250"/>
    <property type="project" value="UniProtKB"/>
</dbReference>
<dbReference type="GO" id="GO:0005886">
    <property type="term" value="C:plasma membrane"/>
    <property type="evidence" value="ECO:0000250"/>
    <property type="project" value="UniProtKB"/>
</dbReference>
<dbReference type="GO" id="GO:0006915">
    <property type="term" value="P:apoptotic process"/>
    <property type="evidence" value="ECO:0000250"/>
    <property type="project" value="UniProtKB"/>
</dbReference>
<dbReference type="GO" id="GO:0030030">
    <property type="term" value="P:cell projection organization"/>
    <property type="evidence" value="ECO:0007669"/>
    <property type="project" value="UniProtKB-KW"/>
</dbReference>
<dbReference type="GO" id="GO:0030308">
    <property type="term" value="P:negative regulation of cell growth"/>
    <property type="evidence" value="ECO:0000250"/>
    <property type="project" value="UniProtKB"/>
</dbReference>
<dbReference type="GO" id="GO:1902018">
    <property type="term" value="P:negative regulation of cilium assembly"/>
    <property type="evidence" value="ECO:0000250"/>
    <property type="project" value="UniProtKB"/>
</dbReference>
<dbReference type="InterPro" id="IPR043596">
    <property type="entry name" value="CFAP53/TCHP"/>
</dbReference>
<dbReference type="InterPro" id="IPR043597">
    <property type="entry name" value="TPH_dom"/>
</dbReference>
<dbReference type="PANTHER" id="PTHR31183:SF2">
    <property type="entry name" value="TRICHOPLEIN KERATIN FILAMENT-BINDING PROTEIN"/>
    <property type="match status" value="1"/>
</dbReference>
<dbReference type="PANTHER" id="PTHR31183">
    <property type="entry name" value="TRICHOPLEIN KERATIN FILAMENT-BINDING PROTEIN FAMILY MEMBER"/>
    <property type="match status" value="1"/>
</dbReference>
<dbReference type="Pfam" id="PF13868">
    <property type="entry name" value="TPH"/>
    <property type="match status" value="1"/>
</dbReference>
<gene>
    <name evidence="14" type="primary">Tchp</name>
</gene>